<evidence type="ECO:0000250" key="1">
    <source>
        <dbReference type="UniProtKB" id="A0A0M3Q1Q3"/>
    </source>
</evidence>
<evidence type="ECO:0000250" key="2">
    <source>
        <dbReference type="UniProtKB" id="E2E2P0"/>
    </source>
</evidence>
<evidence type="ECO:0000250" key="3">
    <source>
        <dbReference type="UniProtKB" id="Q40577"/>
    </source>
</evidence>
<evidence type="ECO:0000250" key="4">
    <source>
        <dbReference type="UniProtKB" id="Q9X839"/>
    </source>
</evidence>
<evidence type="ECO:0000269" key="5">
    <source>
    </source>
</evidence>
<evidence type="ECO:0000269" key="6">
    <source ref="2"/>
</evidence>
<evidence type="ECO:0000269" key="7">
    <source ref="3"/>
</evidence>
<evidence type="ECO:0000303" key="8">
    <source>
    </source>
</evidence>
<evidence type="ECO:0000305" key="9"/>
<evidence type="ECO:0000305" key="10">
    <source>
    </source>
</evidence>
<organism>
    <name type="scientific">Origanum vulgare</name>
    <name type="common">Wild marjoram</name>
    <dbReference type="NCBI Taxonomy" id="39352"/>
    <lineage>
        <taxon>Eukaryota</taxon>
        <taxon>Viridiplantae</taxon>
        <taxon>Streptophyta</taxon>
        <taxon>Embryophyta</taxon>
        <taxon>Tracheophyta</taxon>
        <taxon>Spermatophyta</taxon>
        <taxon>Magnoliopsida</taxon>
        <taxon>eudicotyledons</taxon>
        <taxon>Gunneridae</taxon>
        <taxon>Pentapetalae</taxon>
        <taxon>asterids</taxon>
        <taxon>lamiids</taxon>
        <taxon>Lamiales</taxon>
        <taxon>Lamiaceae</taxon>
        <taxon>Nepetoideae</taxon>
        <taxon>Mentheae</taxon>
        <taxon>Origanum</taxon>
    </lineage>
</organism>
<feature type="chain" id="PRO_0000418650" description="Bicyclo-germacrene synthase">
    <location>
        <begin position="1"/>
        <end position="555"/>
    </location>
</feature>
<feature type="region of interest" description="Homodimerization" evidence="1">
    <location>
        <begin position="316"/>
        <end position="322"/>
    </location>
</feature>
<feature type="region of interest" description="Homodimerization" evidence="1">
    <location>
        <begin position="392"/>
        <end position="429"/>
    </location>
</feature>
<feature type="short sequence motif" description="DDXXD motif" evidence="4">
    <location>
        <begin position="311"/>
        <end position="315"/>
    </location>
</feature>
<feature type="binding site" evidence="3">
    <location>
        <position position="311"/>
    </location>
    <ligand>
        <name>Mg(2+)</name>
        <dbReference type="ChEBI" id="CHEBI:18420"/>
        <label>1</label>
    </ligand>
</feature>
<feature type="binding site" evidence="3">
    <location>
        <position position="311"/>
    </location>
    <ligand>
        <name>Mg(2+)</name>
        <dbReference type="ChEBI" id="CHEBI:18420"/>
        <label>2</label>
    </ligand>
</feature>
<feature type="binding site" evidence="3">
    <location>
        <position position="315"/>
    </location>
    <ligand>
        <name>Mg(2+)</name>
        <dbReference type="ChEBI" id="CHEBI:18420"/>
        <label>1</label>
    </ligand>
</feature>
<feature type="binding site" evidence="3">
    <location>
        <position position="315"/>
    </location>
    <ligand>
        <name>Mg(2+)</name>
        <dbReference type="ChEBI" id="CHEBI:18420"/>
        <label>2</label>
    </ligand>
</feature>
<feature type="binding site" evidence="3">
    <location>
        <position position="459"/>
    </location>
    <ligand>
        <name>Mg(2+)</name>
        <dbReference type="ChEBI" id="CHEBI:18420"/>
        <label>3</label>
    </ligand>
</feature>
<feature type="binding site" evidence="3">
    <location>
        <position position="467"/>
    </location>
    <ligand>
        <name>Mg(2+)</name>
        <dbReference type="ChEBI" id="CHEBI:18420"/>
        <label>3</label>
    </ligand>
</feature>
<dbReference type="EC" id="4.2.3.100" evidence="5 6"/>
<dbReference type="EC" id="4.2.3.-" evidence="5 6"/>
<dbReference type="EC" id="3.1.7.11" evidence="5 6"/>
<dbReference type="EC" id="4.2.3.20" evidence="5 6"/>
<dbReference type="EC" id="4.2.3.113" evidence="5 6"/>
<dbReference type="EMBL" id="GU385973">
    <property type="protein sequence ID" value="ADK73618.1"/>
    <property type="molecule type" value="mRNA"/>
</dbReference>
<dbReference type="SMR" id="E2E2N7"/>
<dbReference type="KEGG" id="ag:ADK73618"/>
<dbReference type="UniPathway" id="UPA00213"/>
<dbReference type="GO" id="GO:0034002">
    <property type="term" value="F:(R)-limonene synthase activity"/>
    <property type="evidence" value="ECO:0007669"/>
    <property type="project" value="RHEA"/>
</dbReference>
<dbReference type="GO" id="GO:0016787">
    <property type="term" value="F:hydrolase activity"/>
    <property type="evidence" value="ECO:0007669"/>
    <property type="project" value="UniProtKB-KW"/>
</dbReference>
<dbReference type="GO" id="GO:0000287">
    <property type="term" value="F:magnesium ion binding"/>
    <property type="evidence" value="ECO:0000314"/>
    <property type="project" value="UniProtKB"/>
</dbReference>
<dbReference type="GO" id="GO:0042803">
    <property type="term" value="F:protein homodimerization activity"/>
    <property type="evidence" value="ECO:0000250"/>
    <property type="project" value="UniProtKB"/>
</dbReference>
<dbReference type="GO" id="GO:0010334">
    <property type="term" value="F:sesquiterpene synthase activity"/>
    <property type="evidence" value="ECO:0000314"/>
    <property type="project" value="UniProtKB"/>
</dbReference>
<dbReference type="GO" id="GO:0016102">
    <property type="term" value="P:diterpenoid biosynthetic process"/>
    <property type="evidence" value="ECO:0007669"/>
    <property type="project" value="InterPro"/>
</dbReference>
<dbReference type="CDD" id="cd00684">
    <property type="entry name" value="Terpene_cyclase_plant_C1"/>
    <property type="match status" value="1"/>
</dbReference>
<dbReference type="FunFam" id="1.10.600.10:FF:000007">
    <property type="entry name" value="Isoprene synthase, chloroplastic"/>
    <property type="match status" value="1"/>
</dbReference>
<dbReference type="FunFam" id="1.50.10.130:FF:000001">
    <property type="entry name" value="Isoprene synthase, chloroplastic"/>
    <property type="match status" value="1"/>
</dbReference>
<dbReference type="Gene3D" id="1.10.600.10">
    <property type="entry name" value="Farnesyl Diphosphate Synthase"/>
    <property type="match status" value="1"/>
</dbReference>
<dbReference type="Gene3D" id="1.50.10.130">
    <property type="entry name" value="Terpene synthase, N-terminal domain"/>
    <property type="match status" value="1"/>
</dbReference>
<dbReference type="InterPro" id="IPR008949">
    <property type="entry name" value="Isoprenoid_synthase_dom_sf"/>
</dbReference>
<dbReference type="InterPro" id="IPR034741">
    <property type="entry name" value="Terpene_cyclase-like_1_C"/>
</dbReference>
<dbReference type="InterPro" id="IPR044814">
    <property type="entry name" value="Terpene_cyclase_plant_C1"/>
</dbReference>
<dbReference type="InterPro" id="IPR001906">
    <property type="entry name" value="Terpene_synth_N"/>
</dbReference>
<dbReference type="InterPro" id="IPR036965">
    <property type="entry name" value="Terpene_synth_N_sf"/>
</dbReference>
<dbReference type="InterPro" id="IPR050148">
    <property type="entry name" value="Terpene_synthase-like"/>
</dbReference>
<dbReference type="InterPro" id="IPR005630">
    <property type="entry name" value="Terpene_synthase_metal-bd"/>
</dbReference>
<dbReference type="InterPro" id="IPR008930">
    <property type="entry name" value="Terpenoid_cyclase/PrenylTrfase"/>
</dbReference>
<dbReference type="PANTHER" id="PTHR31225:SF221">
    <property type="entry name" value="(-)-GERMACRENE D SYNTHASE"/>
    <property type="match status" value="1"/>
</dbReference>
<dbReference type="PANTHER" id="PTHR31225">
    <property type="entry name" value="OS04G0344100 PROTEIN-RELATED"/>
    <property type="match status" value="1"/>
</dbReference>
<dbReference type="Pfam" id="PF01397">
    <property type="entry name" value="Terpene_synth"/>
    <property type="match status" value="1"/>
</dbReference>
<dbReference type="Pfam" id="PF03936">
    <property type="entry name" value="Terpene_synth_C"/>
    <property type="match status" value="1"/>
</dbReference>
<dbReference type="SFLD" id="SFLDS00005">
    <property type="entry name" value="Isoprenoid_Synthase_Type_I"/>
    <property type="match status" value="1"/>
</dbReference>
<dbReference type="SFLD" id="SFLDG01019">
    <property type="entry name" value="Terpene_Cyclase_Like_1_C_Termi"/>
    <property type="match status" value="1"/>
</dbReference>
<dbReference type="SUPFAM" id="SSF48239">
    <property type="entry name" value="Terpenoid cyclases/Protein prenyltransferases"/>
    <property type="match status" value="1"/>
</dbReference>
<dbReference type="SUPFAM" id="SSF48576">
    <property type="entry name" value="Terpenoid synthases"/>
    <property type="match status" value="1"/>
</dbReference>
<comment type="function">
    <text evidence="5 6">Involved in the biosynthesis of phenolic sesquiterpenes natural products (Ref.2). Sesquiterpene synthase converting (2E,6E)-farnesyl diphosphate (FPP) to alloaromadendrene and bicyclo-germacrene. The product formation is dependent on the metal ions present and in presence of manganese, bicyclo-germacrene is greatly favored while both alloaromadendrene and bicyclo-germacrene are produced in equivalent amounts in the presence of magnesium. Can also convert geranyl diphosphate (GPP) to terpinolene, limonene and geraniol, and this conversion is not affected by the presence of magnesium or manganese.</text>
</comment>
<comment type="catalytic activity">
    <reaction evidence="5">
        <text>(2E,6E)-farnesyl diphosphate = bicyclogermacrene + diphosphate</text>
        <dbReference type="Rhea" id="RHEA:31999"/>
        <dbReference type="ChEBI" id="CHEBI:33019"/>
        <dbReference type="ChEBI" id="CHEBI:63709"/>
        <dbReference type="ChEBI" id="CHEBI:175763"/>
        <dbReference type="EC" id="4.2.3.100"/>
    </reaction>
    <physiologicalReaction direction="left-to-right" evidence="5 6">
        <dbReference type="Rhea" id="RHEA:32000"/>
    </physiologicalReaction>
</comment>
<comment type="catalytic activity">
    <reaction evidence="5 6">
        <text>(2E)-geranyl diphosphate = terpinolene + diphosphate</text>
        <dbReference type="Rhea" id="RHEA:25500"/>
        <dbReference type="ChEBI" id="CHEBI:9457"/>
        <dbReference type="ChEBI" id="CHEBI:33019"/>
        <dbReference type="ChEBI" id="CHEBI:58057"/>
        <dbReference type="EC" id="4.2.3.113"/>
    </reaction>
    <physiologicalReaction direction="left-to-right" evidence="5 6">
        <dbReference type="Rhea" id="RHEA:25501"/>
    </physiologicalReaction>
</comment>
<comment type="catalytic activity">
    <reaction evidence="5 6">
        <text>(2E)-geranyl diphosphate = (4R)-limonene + diphosphate</text>
        <dbReference type="Rhea" id="RHEA:10940"/>
        <dbReference type="ChEBI" id="CHEBI:15382"/>
        <dbReference type="ChEBI" id="CHEBI:33019"/>
        <dbReference type="ChEBI" id="CHEBI:58057"/>
        <dbReference type="EC" id="4.2.3.20"/>
    </reaction>
    <physiologicalReaction direction="left-to-right" evidence="5 6">
        <dbReference type="Rhea" id="RHEA:10941"/>
    </physiologicalReaction>
</comment>
<comment type="catalytic activity">
    <reaction evidence="5 6">
        <text>(2E)-geranyl diphosphate + H2O = (2E)-geraniol + diphosphate</text>
        <dbReference type="Rhea" id="RHEA:32679"/>
        <dbReference type="ChEBI" id="CHEBI:15377"/>
        <dbReference type="ChEBI" id="CHEBI:17447"/>
        <dbReference type="ChEBI" id="CHEBI:33019"/>
        <dbReference type="ChEBI" id="CHEBI:58057"/>
        <dbReference type="EC" id="3.1.7.11"/>
    </reaction>
    <physiologicalReaction direction="left-to-right" evidence="5 6">
        <dbReference type="Rhea" id="RHEA:32680"/>
    </physiologicalReaction>
</comment>
<comment type="catalytic activity">
    <reaction evidence="5 6">
        <text>(2E,6E)-farnesyl diphosphate = allo-aromadendrene + diphosphate</text>
        <dbReference type="Rhea" id="RHEA:67400"/>
        <dbReference type="ChEBI" id="CHEBI:33019"/>
        <dbReference type="ChEBI" id="CHEBI:166670"/>
        <dbReference type="ChEBI" id="CHEBI:175763"/>
    </reaction>
    <physiologicalReaction direction="left-to-right" evidence="5 6">
        <dbReference type="Rhea" id="RHEA:67401"/>
    </physiologicalReaction>
</comment>
<comment type="cofactor">
    <cofactor evidence="5">
        <name>Mn(2+)</name>
        <dbReference type="ChEBI" id="CHEBI:29035"/>
    </cofactor>
    <cofactor evidence="5">
        <name>Mg(2+)</name>
        <dbReference type="ChEBI" id="CHEBI:18420"/>
    </cofactor>
    <text evidence="2">Binds 3 Mg(2+) or Mn(2+) ions per subunit.</text>
</comment>
<comment type="pathway">
    <text evidence="5 6">Secondary metabolite biosynthesis; terpenoid biosynthesis.</text>
</comment>
<comment type="subunit">
    <text evidence="1">Homodimer.</text>
</comment>
<comment type="tissue specificity">
    <text evidence="5 7">Expressed in peltate glandular trichomes (PubMed:20419468). Present at low levels in flowers, leaves and stems (Ref.3).</text>
</comment>
<comment type="domain">
    <text evidence="4">The Asp-Asp-Xaa-Xaa-Asp/Glu (DDXXD/E) motif is important for the catalytic activity, presumably through binding to Mg(2+).</text>
</comment>
<comment type="similarity">
    <text evidence="9">Belongs to the terpene synthase family.</text>
</comment>
<accession>E2E2N7</accession>
<reference key="1">
    <citation type="journal article" date="2010" name="Plant Mol. Biol.">
        <title>Terpene synthases of oregano (Origanum vulgare L.) and their roles in the pathway and regulation of terpene biosynthesis.</title>
        <authorList>
            <person name="Crocoll C."/>
            <person name="Asbach J."/>
            <person name="Novak J."/>
            <person name="Gershenzon J."/>
            <person name="Degenhardt J."/>
        </authorList>
    </citation>
    <scope>NUCLEOTIDE SEQUENCE [MRNA]</scope>
    <scope>FUNCTION</scope>
    <scope>CATALYTIC ACTIVITY</scope>
    <scope>COFACTOR</scope>
    <scope>TISSUE SPECIFICITY</scope>
    <scope>PATHWAY</scope>
    <source>
        <strain>cv. f02-04</strain>
        <tissue>Trichome gland</tissue>
    </source>
</reference>
<reference key="2">
    <citation type="thesis" date="2011" institute="Friedrich Schiller University of Jena" country="Germany">
        <title>Biosynthesis of the phenolic monoterpenes, thymol and carvacrol, by terpene synthases and cytochrome P450s in oregano and thyme.</title>
        <authorList>
            <person name="Crocoll C."/>
        </authorList>
    </citation>
    <scope>FUNCTION</scope>
    <scope>CATALYTIC ACTIVITY</scope>
    <scope>PATHWAY</scope>
</reference>
<reference key="3">
    <citation type="journal article" date="2018" name="Ind. Crops Prod.">
        <title>Divergence in tissue-specific expression patterns of genes associated with the terpenoid biosynthesis in two oregano species Origanum vulgare L., and Origanum majorana.</title>
        <authorList>
            <person name="Jan S."/>
            <person name="Mir J.I."/>
            <person name="Shafi W."/>
            <person name="Faktoo S.Z."/>
            <person name="Singh D.B."/>
            <person name="Wijaya L."/>
            <person name="Alyemeni M.N."/>
            <person name="Ahmad P."/>
        </authorList>
    </citation>
    <scope>TISSUE SPECIFICITY</scope>
</reference>
<name>BCGS_ORIVU</name>
<gene>
    <name type="primary">TPS4</name>
</gene>
<proteinExistence type="evidence at protein level"/>
<protein>
    <recommendedName>
        <fullName evidence="10">Bicyclo-germacrene synthase</fullName>
        <ecNumber evidence="5 6">4.2.3.100</ecNumber>
    </recommendedName>
    <alternativeName>
        <fullName evidence="10">Allo-aromadendrene synthase</fullName>
        <ecNumber evidence="5 6">4.2.3.-</ecNumber>
    </alternativeName>
    <alternativeName>
        <fullName evidence="10">Geraniol synthase</fullName>
        <ecNumber evidence="5 6">3.1.7.11</ecNumber>
    </alternativeName>
    <alternativeName>
        <fullName evidence="10">Limonene synthase</fullName>
        <ecNumber evidence="5 6">4.2.3.20</ecNumber>
    </alternativeName>
    <alternativeName>
        <fullName evidence="8">Terpene synthase 4</fullName>
        <shortName evidence="8">OvTPS4</shortName>
    </alternativeName>
    <alternativeName>
        <fullName evidence="10">Terpinolene synthase</fullName>
        <ecNumber evidence="5 6">4.2.3.113</ecNumber>
    </alternativeName>
</protein>
<keyword id="KW-0378">Hydrolase</keyword>
<keyword id="KW-0456">Lyase</keyword>
<keyword id="KW-0460">Magnesium</keyword>
<keyword id="KW-0464">Manganese</keyword>
<keyword id="KW-0479">Metal-binding</keyword>
<sequence>MEIYSPVVPAVKDVKRLDEIRKSAKFHPSIWGDFFLSYNSDNTQISEAEEEEVAKQKEAVRELLAQVPEGSTYKMELIDLIQRLGVNYHFEKEIHDSLNYIHENSQHNDDEVRTTALRFRLLRQQGYRVPCDVFRKFTDGEGNFATALTNDVEGLLELYEASHLATRGEEILDRAMEFSSSHLQALLNQHLVGSVSLSKRVDEALKMPIRKTLTRLGARKFISLYQEDESRNELLLNFAKLDFNMVQKMHQRELSDATRWWKKLEVAKRMPYARDRVVECFFWIVGVYFEPCYATARRILSKAINMASIVDDTYEYATLDELQILTDAIQRWDVNETLEDSPPHVQMCYKALIQAYAEIEDEVVENFGGEELYRVQYAIEHVKQSAVAFFEEAKWIYNNSIPTVEEYMKVAFVTCGYMMLSTTSLVGVGSDRVSKADFDWIVNEPLIVRASCVICRLMDDLVGDEYEEKPSSVLCYMKQYVVSKDEARARLEQQVKDAWKDMNEECIEPRPASMQILTRVLNLGRVIHLLYREGDSYTDPNRSKEWVKMVFVDPI</sequence>